<comment type="pathway">
    <text evidence="5">Glycan metabolism.</text>
</comment>
<comment type="subcellular location">
    <subcellularLocation>
        <location evidence="2">Membrane</location>
        <topology evidence="5">Single-pass type II membrane protein</topology>
    </subcellularLocation>
</comment>
<comment type="similarity">
    <text evidence="5">Belongs to the glycosyltransferase GT106 family.</text>
</comment>
<comment type="sequence caution" evidence="5">
    <conflict type="erroneous gene model prediction">
        <sequence resource="EMBL-CDS" id="AAF31019"/>
    </conflict>
</comment>
<comment type="sequence caution" evidence="5">
    <conflict type="erroneous gene model prediction">
        <sequence resource="EMBL-CDS" id="AAF79229"/>
    </conflict>
</comment>
<reference key="1">
    <citation type="journal article" date="2000" name="Nature">
        <title>Sequence and analysis of chromosome 1 of the plant Arabidopsis thaliana.</title>
        <authorList>
            <person name="Theologis A."/>
            <person name="Ecker J.R."/>
            <person name="Palm C.J."/>
            <person name="Federspiel N.A."/>
            <person name="Kaul S."/>
            <person name="White O."/>
            <person name="Alonso J."/>
            <person name="Altafi H."/>
            <person name="Araujo R."/>
            <person name="Bowman C.L."/>
            <person name="Brooks S.Y."/>
            <person name="Buehler E."/>
            <person name="Chan A."/>
            <person name="Chao Q."/>
            <person name="Chen H."/>
            <person name="Cheuk R.F."/>
            <person name="Chin C.W."/>
            <person name="Chung M.K."/>
            <person name="Conn L."/>
            <person name="Conway A.B."/>
            <person name="Conway A.R."/>
            <person name="Creasy T.H."/>
            <person name="Dewar K."/>
            <person name="Dunn P."/>
            <person name="Etgu P."/>
            <person name="Feldblyum T.V."/>
            <person name="Feng J.-D."/>
            <person name="Fong B."/>
            <person name="Fujii C.Y."/>
            <person name="Gill J.E."/>
            <person name="Goldsmith A.D."/>
            <person name="Haas B."/>
            <person name="Hansen N.F."/>
            <person name="Hughes B."/>
            <person name="Huizar L."/>
            <person name="Hunter J.L."/>
            <person name="Jenkins J."/>
            <person name="Johnson-Hopson C."/>
            <person name="Khan S."/>
            <person name="Khaykin E."/>
            <person name="Kim C.J."/>
            <person name="Koo H.L."/>
            <person name="Kremenetskaia I."/>
            <person name="Kurtz D.B."/>
            <person name="Kwan A."/>
            <person name="Lam B."/>
            <person name="Langin-Hooper S."/>
            <person name="Lee A."/>
            <person name="Lee J.M."/>
            <person name="Lenz C.A."/>
            <person name="Li J.H."/>
            <person name="Li Y.-P."/>
            <person name="Lin X."/>
            <person name="Liu S.X."/>
            <person name="Liu Z.A."/>
            <person name="Luros J.S."/>
            <person name="Maiti R."/>
            <person name="Marziali A."/>
            <person name="Militscher J."/>
            <person name="Miranda M."/>
            <person name="Nguyen M."/>
            <person name="Nierman W.C."/>
            <person name="Osborne B.I."/>
            <person name="Pai G."/>
            <person name="Peterson J."/>
            <person name="Pham P.K."/>
            <person name="Rizzo M."/>
            <person name="Rooney T."/>
            <person name="Rowley D."/>
            <person name="Sakano H."/>
            <person name="Salzberg S.L."/>
            <person name="Schwartz J.R."/>
            <person name="Shinn P."/>
            <person name="Southwick A.M."/>
            <person name="Sun H."/>
            <person name="Tallon L.J."/>
            <person name="Tambunga G."/>
            <person name="Toriumi M.J."/>
            <person name="Town C.D."/>
            <person name="Utterback T."/>
            <person name="Van Aken S."/>
            <person name="Vaysberg M."/>
            <person name="Vysotskaia V.S."/>
            <person name="Walker M."/>
            <person name="Wu D."/>
            <person name="Yu G."/>
            <person name="Fraser C.M."/>
            <person name="Venter J.C."/>
            <person name="Davis R.W."/>
        </authorList>
    </citation>
    <scope>NUCLEOTIDE SEQUENCE [LARGE SCALE GENOMIC DNA]</scope>
    <source>
        <strain>cv. Columbia</strain>
    </source>
</reference>
<reference key="2">
    <citation type="journal article" date="2017" name="Plant J.">
        <title>Araport11: a complete reannotation of the Arabidopsis thaliana reference genome.</title>
        <authorList>
            <person name="Cheng C.Y."/>
            <person name="Krishnakumar V."/>
            <person name="Chan A.P."/>
            <person name="Thibaud-Nissen F."/>
            <person name="Schobel S."/>
            <person name="Town C.D."/>
        </authorList>
    </citation>
    <scope>GENOME REANNOTATION</scope>
    <source>
        <strain>cv. Columbia</strain>
    </source>
</reference>
<reference key="3">
    <citation type="journal article" date="2012" name="Front. Plant Sci.">
        <title>Plant glycosyltransferases beyond CAZy: a perspective on DUF families.</title>
        <authorList>
            <person name="Hansen S.F."/>
            <person name="Harholt J."/>
            <person name="Oikawa A."/>
            <person name="Scheller H.V."/>
        </authorList>
    </citation>
    <scope>GENE FAMILY</scope>
    <scope>REVIEW</scope>
</reference>
<reference key="4">
    <citation type="journal article" date="2012" name="PLoS ONE">
        <title>The FRIABLE1 gene product affects cell adhesion in Arabidopsis.</title>
        <authorList>
            <person name="Neumetzler L."/>
            <person name="Humphrey T."/>
            <person name="Lumba S."/>
            <person name="Snyder S."/>
            <person name="Yeats T.H."/>
            <person name="Usadel B."/>
            <person name="Vasilevski A."/>
            <person name="Patel J."/>
            <person name="Rose J.K."/>
            <person name="Persson S."/>
            <person name="Bonetta D."/>
        </authorList>
    </citation>
    <scope>GENE FAMILY</scope>
</reference>
<reference key="5">
    <citation type="journal article" date="2012" name="PLoS ONE">
        <title>Identification of putative rhamnogalacturonan-II specific glycosyltransferases in Arabidopsis using a combination of bioinformatics approaches.</title>
        <authorList>
            <person name="Voxeur A."/>
            <person name="Andre A."/>
            <person name="Breton C."/>
            <person name="Lerouge P."/>
        </authorList>
    </citation>
    <scope>GENE FAMILY</scope>
</reference>
<reference key="6">
    <citation type="journal article" date="2013" name="Plant J.">
        <title>Identification of an additional protein involved in mannan biosynthesis.</title>
        <authorList>
            <person name="Wang Y."/>
            <person name="Mortimer J.C."/>
            <person name="Davis J."/>
            <person name="Dupree P."/>
            <person name="Keegstra K."/>
        </authorList>
    </citation>
    <scope>GENE FAMILY</scope>
</reference>
<reference key="7">
    <citation type="journal article" date="2014" name="Plant J.">
        <title>The plant glycosyltransferase clone collection for functional genomics.</title>
        <authorList>
            <person name="Lao J."/>
            <person name="Oikawa A."/>
            <person name="Bromley J.R."/>
            <person name="McInerney P."/>
            <person name="Suttangkakul A."/>
            <person name="Smith-Moritz A.M."/>
            <person name="Plahar H."/>
            <person name="Chiu T.-Y."/>
            <person name="Gonzalez Fernandez-Nino S.M.G."/>
            <person name="Ebert B."/>
            <person name="Yang F."/>
            <person name="Christiansen K.M."/>
            <person name="Hansen S.F."/>
            <person name="Stonebloom S."/>
            <person name="Adams P.D."/>
            <person name="Ronald P.C."/>
            <person name="Hillson N.J."/>
            <person name="Hadi M.Z."/>
            <person name="Vega-Sanchez M.E."/>
            <person name="Loque D."/>
            <person name="Scheller H.V."/>
            <person name="Heazlewood J.L."/>
        </authorList>
    </citation>
    <scope>WEB RESOURCE</scope>
</reference>
<organism>
    <name type="scientific">Arabidopsis thaliana</name>
    <name type="common">Mouse-ear cress</name>
    <dbReference type="NCBI Taxonomy" id="3702"/>
    <lineage>
        <taxon>Eukaryota</taxon>
        <taxon>Viridiplantae</taxon>
        <taxon>Streptophyta</taxon>
        <taxon>Embryophyta</taxon>
        <taxon>Tracheophyta</taxon>
        <taxon>Spermatophyta</taxon>
        <taxon>Magnoliopsida</taxon>
        <taxon>eudicotyledons</taxon>
        <taxon>Gunneridae</taxon>
        <taxon>Pentapetalae</taxon>
        <taxon>rosids</taxon>
        <taxon>malvids</taxon>
        <taxon>Brassicales</taxon>
        <taxon>Brassicaceae</taxon>
        <taxon>Camelineae</taxon>
        <taxon>Arabidopsis</taxon>
    </lineage>
</organism>
<accession>F4HXW9</accession>
<accession>Q9LQT6</accession>
<accession>Q9M9Q8</accession>
<feature type="chain" id="PRO_0000442067" description="O-fucosyltransferase 4">
    <location>
        <begin position="1"/>
        <end position="562"/>
    </location>
</feature>
<feature type="transmembrane region" description="Helical; Signal-anchor for type II membrane protein" evidence="5">
    <location>
        <begin position="67"/>
        <end position="87"/>
    </location>
</feature>
<feature type="region of interest" description="Disordered" evidence="4">
    <location>
        <begin position="10"/>
        <end position="46"/>
    </location>
</feature>
<feature type="compositionally biased region" description="Low complexity" evidence="4">
    <location>
        <begin position="37"/>
        <end position="46"/>
    </location>
</feature>
<feature type="binding site" evidence="1">
    <location>
        <begin position="332"/>
        <end position="334"/>
    </location>
    <ligand>
        <name>substrate</name>
    </ligand>
</feature>
<feature type="glycosylation site" description="N-linked (GlcNAc...) asparagine" evidence="3">
    <location>
        <position position="122"/>
    </location>
</feature>
<feature type="glycosylation site" description="N-linked (GlcNAc...) asparagine" evidence="3">
    <location>
        <position position="146"/>
    </location>
</feature>
<feature type="glycosylation site" description="N-linked (GlcNAc...) asparagine" evidence="3">
    <location>
        <position position="185"/>
    </location>
</feature>
<feature type="glycosylation site" description="N-linked (GlcNAc...) asparagine" evidence="3">
    <location>
        <position position="239"/>
    </location>
</feature>
<feature type="glycosylation site" description="N-linked (GlcNAc...) asparagine" evidence="3">
    <location>
        <position position="404"/>
    </location>
</feature>
<feature type="glycosylation site" description="N-linked (GlcNAc...) asparagine" evidence="3">
    <location>
        <position position="420"/>
    </location>
</feature>
<feature type="glycosylation site" description="N-linked (GlcNAc...) asparagine" evidence="3">
    <location>
        <position position="450"/>
    </location>
</feature>
<feature type="glycosylation site" description="N-linked (GlcNAc...) asparagine" evidence="3">
    <location>
        <position position="555"/>
    </location>
</feature>
<sequence length="562" mass="63408">MISQVERDLSIQNRLPGSDHTTPSPPTSPHLCRSRSKSSSVSGQQQSRNVAHRLSWIILSVLLRRQGILLFAPIIYISCMLFHLHAASFDASPIIHRRPAPGSVYRSPQVYARLRGEIEADNTTADAISTIWKRSYKGVEWKPCVNMSTGVLPVSNGFIFIEANGGLNQQRTSICNAVAVAGYLNATLVIPNFHYHSIWKDPSKFGDIYDEEYFIDTLANDVRVVDTVPEYLMERFDYNLTNVYNFRVKAWAPTSYYRDSVLPKLLEEKVIRISPFANRLSFDAPRAVQRFRCLANNVALRFSKPILTQGETLVNKMKGLSANNAGKYVSVHLRFEEDMVAFSCCVFDGGDQEKQDMIAARERGWKGKFTKPGRVIRPGANRLNGKCPLTPLEVGLMLRGMGFNKSTYIFLAAGPIYSANRTMAPLLEMFPNLQTKEMLASEEDLAPFKNFSSRMAAIDYTVCLHSEVFVTTQGGNFPHFLMGHRRYLFGGHSKTIQPDKRKLAVLFDNPKLGWKSFKRQMLSMRSHSDSKGFELKRSSDSIYIFPCPDCMCRKNKTTASAT</sequence>
<protein>
    <recommendedName>
        <fullName evidence="5">O-fucosyltransferase 4</fullName>
        <shortName evidence="5">O-FucT-4</shortName>
        <ecNumber evidence="5">2.4.1.-</ecNumber>
    </recommendedName>
    <alternativeName>
        <fullName evidence="5">O-fucosyltransferase family protein</fullName>
    </alternativeName>
</protein>
<evidence type="ECO:0000250" key="1">
    <source>
        <dbReference type="UniProtKB" id="Q9H488"/>
    </source>
</evidence>
<evidence type="ECO:0000255" key="2"/>
<evidence type="ECO:0000255" key="3">
    <source>
        <dbReference type="PROSITE-ProRule" id="PRU00498"/>
    </source>
</evidence>
<evidence type="ECO:0000256" key="4">
    <source>
        <dbReference type="SAM" id="MobiDB-lite"/>
    </source>
</evidence>
<evidence type="ECO:0000305" key="5"/>
<evidence type="ECO:0000312" key="6">
    <source>
        <dbReference type="Araport" id="AT1G14970"/>
    </source>
</evidence>
<evidence type="ECO:0000312" key="7">
    <source>
        <dbReference type="EMBL" id="AAF31019.1"/>
    </source>
</evidence>
<evidence type="ECO:0000312" key="8">
    <source>
        <dbReference type="EMBL" id="AAF79229.1"/>
    </source>
</evidence>
<keyword id="KW-0119">Carbohydrate metabolism</keyword>
<keyword id="KW-0294">Fucose metabolism</keyword>
<keyword id="KW-0325">Glycoprotein</keyword>
<keyword id="KW-0328">Glycosyltransferase</keyword>
<keyword id="KW-0472">Membrane</keyword>
<keyword id="KW-1185">Reference proteome</keyword>
<keyword id="KW-0735">Signal-anchor</keyword>
<keyword id="KW-0808">Transferase</keyword>
<keyword id="KW-0812">Transmembrane</keyword>
<keyword id="KW-1133">Transmembrane helix</keyword>
<name>OFUT4_ARATH</name>
<gene>
    <name evidence="5" type="primary">OFUT4</name>
    <name evidence="6" type="ordered locus">At1g14970</name>
    <name evidence="8" type="ORF">F10B6.36</name>
    <name evidence="7" type="ORF">T15D22.1</name>
</gene>
<dbReference type="EC" id="2.4.1.-" evidence="5"/>
<dbReference type="EMBL" id="AC006917">
    <property type="protein sequence ID" value="AAF79229.1"/>
    <property type="status" value="ALT_SEQ"/>
    <property type="molecule type" value="Genomic_DNA"/>
</dbReference>
<dbReference type="EMBL" id="AC012189">
    <property type="protein sequence ID" value="AAF31019.1"/>
    <property type="status" value="ALT_SEQ"/>
    <property type="molecule type" value="Genomic_DNA"/>
</dbReference>
<dbReference type="EMBL" id="CP002684">
    <property type="protein sequence ID" value="AEE29248.1"/>
    <property type="molecule type" value="Genomic_DNA"/>
</dbReference>
<dbReference type="PIR" id="A86283">
    <property type="entry name" value="A86283"/>
</dbReference>
<dbReference type="RefSeq" id="NP_172950.1">
    <property type="nucleotide sequence ID" value="NM_101366.3"/>
</dbReference>
<dbReference type="FunCoup" id="F4HXW9">
    <property type="interactions" value="27"/>
</dbReference>
<dbReference type="STRING" id="3702.F4HXW9"/>
<dbReference type="GlyCosmos" id="F4HXW9">
    <property type="glycosylation" value="8 sites, No reported glycans"/>
</dbReference>
<dbReference type="GlyGen" id="F4HXW9">
    <property type="glycosylation" value="8 sites"/>
</dbReference>
<dbReference type="iPTMnet" id="F4HXW9"/>
<dbReference type="PaxDb" id="3702-AT1G14970.1"/>
<dbReference type="ProteomicsDB" id="238937"/>
<dbReference type="EnsemblPlants" id="AT1G14970.1">
    <property type="protein sequence ID" value="AT1G14970.1"/>
    <property type="gene ID" value="AT1G14970"/>
</dbReference>
<dbReference type="GeneID" id="838062"/>
<dbReference type="Gramene" id="AT1G14970.1">
    <property type="protein sequence ID" value="AT1G14970.1"/>
    <property type="gene ID" value="AT1G14970"/>
</dbReference>
<dbReference type="KEGG" id="ath:AT1G14970"/>
<dbReference type="Araport" id="AT1G14970"/>
<dbReference type="TAIR" id="AT1G14970"/>
<dbReference type="eggNOG" id="ENOG502QS6G">
    <property type="taxonomic scope" value="Eukaryota"/>
</dbReference>
<dbReference type="HOGENOM" id="CLU_018420_8_1_1"/>
<dbReference type="InParanoid" id="F4HXW9"/>
<dbReference type="PRO" id="PR:F4HXW9"/>
<dbReference type="Proteomes" id="UP000006548">
    <property type="component" value="Chromosome 1"/>
</dbReference>
<dbReference type="ExpressionAtlas" id="F4HXW9">
    <property type="expression patterns" value="baseline and differential"/>
</dbReference>
<dbReference type="GO" id="GO:0016020">
    <property type="term" value="C:membrane"/>
    <property type="evidence" value="ECO:0007669"/>
    <property type="project" value="UniProtKB-SubCell"/>
</dbReference>
<dbReference type="GO" id="GO:0016757">
    <property type="term" value="F:glycosyltransferase activity"/>
    <property type="evidence" value="ECO:0007669"/>
    <property type="project" value="UniProtKB-KW"/>
</dbReference>
<dbReference type="GO" id="GO:0006004">
    <property type="term" value="P:fucose metabolic process"/>
    <property type="evidence" value="ECO:0007669"/>
    <property type="project" value="UniProtKB-KW"/>
</dbReference>
<dbReference type="CDD" id="cd11299">
    <property type="entry name" value="O-FucT_plant"/>
    <property type="match status" value="1"/>
</dbReference>
<dbReference type="InterPro" id="IPR024709">
    <property type="entry name" value="FucosylTrfase_pln"/>
</dbReference>
<dbReference type="InterPro" id="IPR019378">
    <property type="entry name" value="GDP-Fuc_O-FucTrfase"/>
</dbReference>
<dbReference type="PANTHER" id="PTHR31288:SF27">
    <property type="entry name" value="O-FUCOSYLTRANSFERASE 4"/>
    <property type="match status" value="1"/>
</dbReference>
<dbReference type="PANTHER" id="PTHR31288">
    <property type="entry name" value="O-FUCOSYLTRANSFERASE FAMILY PROTEIN"/>
    <property type="match status" value="1"/>
</dbReference>
<dbReference type="Pfam" id="PF10250">
    <property type="entry name" value="O-FucT"/>
    <property type="match status" value="1"/>
</dbReference>
<dbReference type="PIRSF" id="PIRSF009360">
    <property type="entry name" value="UCP009360"/>
    <property type="match status" value="1"/>
</dbReference>
<proteinExistence type="inferred from homology"/>